<organism>
    <name type="scientific">Arabidopsis thaliana</name>
    <name type="common">Mouse-ear cress</name>
    <dbReference type="NCBI Taxonomy" id="3702"/>
    <lineage>
        <taxon>Eukaryota</taxon>
        <taxon>Viridiplantae</taxon>
        <taxon>Streptophyta</taxon>
        <taxon>Embryophyta</taxon>
        <taxon>Tracheophyta</taxon>
        <taxon>Spermatophyta</taxon>
        <taxon>Magnoliopsida</taxon>
        <taxon>eudicotyledons</taxon>
        <taxon>Gunneridae</taxon>
        <taxon>Pentapetalae</taxon>
        <taxon>rosids</taxon>
        <taxon>malvids</taxon>
        <taxon>Brassicales</taxon>
        <taxon>Brassicaceae</taxon>
        <taxon>Camelineae</taxon>
        <taxon>Arabidopsis</taxon>
    </lineage>
</organism>
<protein>
    <recommendedName>
        <fullName>Transcription factor HEC1</fullName>
    </recommendedName>
    <alternativeName>
        <fullName>Basic helix-loop-helix protein 88</fullName>
        <shortName>AtbHLH88</shortName>
        <shortName>bHLH 88</shortName>
    </alternativeName>
    <alternativeName>
        <fullName>Protein HECATE 1</fullName>
    </alternativeName>
    <alternativeName>
        <fullName>Transcription factor EN 118</fullName>
    </alternativeName>
    <alternativeName>
        <fullName>bHLH transcription factor bHLH088</fullName>
    </alternativeName>
</protein>
<comment type="function">
    <text evidence="3">Required for the female reproductive tract development and fertility.</text>
</comment>
<comment type="subunit">
    <text evidence="3 4 5">Homodimer (Probable). Interacts with SPT. Interacts with BZIP30 (PubMed:27402171).</text>
</comment>
<comment type="interaction">
    <interactant intactId="EBI-1536696">
        <id>Q9FHA7</id>
    </interactant>
    <interactant intactId="EBI-1536703">
        <id>Q9FUA4</id>
        <label>SPT</label>
    </interactant>
    <organismsDiffer>false</organismsDiffer>
    <experiments>3</experiments>
</comment>
<comment type="subcellular location">
    <subcellularLocation>
        <location evidence="1">Nucleus</location>
    </subcellularLocation>
</comment>
<comment type="tissue specificity">
    <text evidence="2 3">Flowers, especially in gynoecium.</text>
</comment>
<comment type="developmental stage">
    <text evidence="3">Expressed in the developing septum, transmitting tract and stigma.</text>
</comment>
<comment type="induction">
    <text evidence="3">Negatively regulated by ARF3/ETT in the abaxial gynoecium.</text>
</comment>
<comment type="disruption phenotype">
    <text evidence="3">Impaired pollen tube growth.</text>
</comment>
<dbReference type="EMBL" id="AF488618">
    <property type="protein sequence ID" value="AAM10961.1"/>
    <property type="molecule type" value="mRNA"/>
</dbReference>
<dbReference type="EMBL" id="AB020742">
    <property type="protein sequence ID" value="BAB10940.1"/>
    <property type="molecule type" value="Genomic_DNA"/>
</dbReference>
<dbReference type="EMBL" id="CP002688">
    <property type="protein sequence ID" value="AED98296.1"/>
    <property type="molecule type" value="Genomic_DNA"/>
</dbReference>
<dbReference type="EMBL" id="AK228927">
    <property type="protein sequence ID" value="BAF00816.1"/>
    <property type="molecule type" value="mRNA"/>
</dbReference>
<dbReference type="RefSeq" id="NP_201507.1">
    <property type="nucleotide sequence ID" value="NM_126106.3"/>
</dbReference>
<dbReference type="SMR" id="Q9FHA7"/>
<dbReference type="BioGRID" id="22083">
    <property type="interactions" value="7"/>
</dbReference>
<dbReference type="FunCoup" id="Q9FHA7">
    <property type="interactions" value="305"/>
</dbReference>
<dbReference type="IntAct" id="Q9FHA7">
    <property type="interactions" value="17"/>
</dbReference>
<dbReference type="STRING" id="3702.Q9FHA7"/>
<dbReference type="PaxDb" id="3702-AT5G67060.1"/>
<dbReference type="EnsemblPlants" id="AT5G67060.1">
    <property type="protein sequence ID" value="AT5G67060.1"/>
    <property type="gene ID" value="AT5G67060"/>
</dbReference>
<dbReference type="GeneID" id="836841"/>
<dbReference type="Gramene" id="AT5G67060.1">
    <property type="protein sequence ID" value="AT5G67060.1"/>
    <property type="gene ID" value="AT5G67060"/>
</dbReference>
<dbReference type="KEGG" id="ath:AT5G67060"/>
<dbReference type="Araport" id="AT5G67060"/>
<dbReference type="TAIR" id="AT5G67060">
    <property type="gene designation" value="HEC1"/>
</dbReference>
<dbReference type="eggNOG" id="ENOG502RXGQ">
    <property type="taxonomic scope" value="Eukaryota"/>
</dbReference>
<dbReference type="HOGENOM" id="CLU_068572_1_0_1"/>
<dbReference type="InParanoid" id="Q9FHA7"/>
<dbReference type="OMA" id="MMHQMEK"/>
<dbReference type="PhylomeDB" id="Q9FHA7"/>
<dbReference type="PRO" id="PR:Q9FHA7"/>
<dbReference type="Proteomes" id="UP000006548">
    <property type="component" value="Chromosome 5"/>
</dbReference>
<dbReference type="ExpressionAtlas" id="Q9FHA7">
    <property type="expression patterns" value="baseline and differential"/>
</dbReference>
<dbReference type="GO" id="GO:0005634">
    <property type="term" value="C:nucleus"/>
    <property type="evidence" value="ECO:0007669"/>
    <property type="project" value="UniProtKB-SubCell"/>
</dbReference>
<dbReference type="GO" id="GO:0003700">
    <property type="term" value="F:DNA-binding transcription factor activity"/>
    <property type="evidence" value="ECO:0000250"/>
    <property type="project" value="TAIR"/>
</dbReference>
<dbReference type="GO" id="GO:0046983">
    <property type="term" value="F:protein dimerization activity"/>
    <property type="evidence" value="ECO:0007669"/>
    <property type="project" value="InterPro"/>
</dbReference>
<dbReference type="GO" id="GO:0043565">
    <property type="term" value="F:sequence-specific DNA binding"/>
    <property type="evidence" value="ECO:0000314"/>
    <property type="project" value="TAIR"/>
</dbReference>
<dbReference type="GO" id="GO:0048462">
    <property type="term" value="P:carpel formation"/>
    <property type="evidence" value="ECO:0000315"/>
    <property type="project" value="TAIR"/>
</dbReference>
<dbReference type="GO" id="GO:0048467">
    <property type="term" value="P:gynoecium development"/>
    <property type="evidence" value="ECO:0000316"/>
    <property type="project" value="TAIR"/>
</dbReference>
<dbReference type="GO" id="GO:0045893">
    <property type="term" value="P:positive regulation of DNA-templated transcription"/>
    <property type="evidence" value="ECO:0000353"/>
    <property type="project" value="TAIR"/>
</dbReference>
<dbReference type="GO" id="GO:2000012">
    <property type="term" value="P:regulation of auxin polar transport"/>
    <property type="evidence" value="ECO:0000316"/>
    <property type="project" value="TAIR"/>
</dbReference>
<dbReference type="GO" id="GO:0006355">
    <property type="term" value="P:regulation of DNA-templated transcription"/>
    <property type="evidence" value="ECO:0000304"/>
    <property type="project" value="TAIR"/>
</dbReference>
<dbReference type="GO" id="GO:0010468">
    <property type="term" value="P:regulation of gene expression"/>
    <property type="evidence" value="ECO:0000315"/>
    <property type="project" value="TAIR"/>
</dbReference>
<dbReference type="GO" id="GO:0009266">
    <property type="term" value="P:response to temperature stimulus"/>
    <property type="evidence" value="ECO:0000270"/>
    <property type="project" value="TAIR"/>
</dbReference>
<dbReference type="GO" id="GO:0010500">
    <property type="term" value="P:transmitting tissue development"/>
    <property type="evidence" value="ECO:0000316"/>
    <property type="project" value="TAIR"/>
</dbReference>
<dbReference type="CDD" id="cd11454">
    <property type="entry name" value="bHLH_AtIND_like"/>
    <property type="match status" value="1"/>
</dbReference>
<dbReference type="FunFam" id="4.10.280.10:FF:000053">
    <property type="entry name" value="BHLH transcription factor"/>
    <property type="match status" value="1"/>
</dbReference>
<dbReference type="Gene3D" id="4.10.280.10">
    <property type="entry name" value="Helix-loop-helix DNA-binding domain"/>
    <property type="match status" value="1"/>
</dbReference>
<dbReference type="InterPro" id="IPR011598">
    <property type="entry name" value="bHLH_dom"/>
</dbReference>
<dbReference type="InterPro" id="IPR036638">
    <property type="entry name" value="HLH_DNA-bd_sf"/>
</dbReference>
<dbReference type="InterPro" id="IPR045843">
    <property type="entry name" value="IND-like"/>
</dbReference>
<dbReference type="PANTHER" id="PTHR45914:SF52">
    <property type="entry name" value="TRANSCRIPTION FACTOR HEC1"/>
    <property type="match status" value="1"/>
</dbReference>
<dbReference type="PANTHER" id="PTHR45914">
    <property type="entry name" value="TRANSCRIPTION FACTOR HEC3-RELATED"/>
    <property type="match status" value="1"/>
</dbReference>
<dbReference type="Pfam" id="PF00010">
    <property type="entry name" value="HLH"/>
    <property type="match status" value="1"/>
</dbReference>
<dbReference type="SMART" id="SM00353">
    <property type="entry name" value="HLH"/>
    <property type="match status" value="1"/>
</dbReference>
<dbReference type="SUPFAM" id="SSF47459">
    <property type="entry name" value="HLH, helix-loop-helix DNA-binding domain"/>
    <property type="match status" value="1"/>
</dbReference>
<dbReference type="PROSITE" id="PS50888">
    <property type="entry name" value="BHLH"/>
    <property type="match status" value="1"/>
</dbReference>
<evidence type="ECO:0000255" key="1">
    <source>
        <dbReference type="PROSITE-ProRule" id="PRU00981"/>
    </source>
</evidence>
<evidence type="ECO:0000269" key="2">
    <source>
    </source>
</evidence>
<evidence type="ECO:0000269" key="3">
    <source>
    </source>
</evidence>
<evidence type="ECO:0000269" key="4">
    <source>
    </source>
</evidence>
<evidence type="ECO:0000305" key="5"/>
<accession>Q9FHA7</accession>
<keyword id="KW-0217">Developmental protein</keyword>
<keyword id="KW-0238">DNA-binding</keyword>
<keyword id="KW-0539">Nucleus</keyword>
<keyword id="KW-1185">Reference proteome</keyword>
<keyword id="KW-0804">Transcription</keyword>
<keyword id="KW-0805">Transcription regulation</keyword>
<proteinExistence type="evidence at protein level"/>
<name>HEC1_ARATH</name>
<sequence length="241" mass="26230">MDSDIMNMMMHQMEKLPEFCNPNSSFFSPDHNNTYPFLFNSTHYQSDHSMTNEPGFRYGSGLLTNPSSISPNTAYSSVFLDKRNNSNNNNNGTNMAAMREMIFRIAVMQPIHIDPEAVKPPKRRNVRISKDPQSVAARHRRERISERIRILQRLVPGGTKMDTASMLDEAIHYVKFLKKQVQSLEEQAVVTGGGGGGGGRVLIGGGGMTAASGGGGGGGVVMKGCGTVGTHQMVGNAQILR</sequence>
<reference key="1">
    <citation type="journal article" date="2003" name="Mol. Biol. Evol.">
        <title>The basic helix-loop-helix transcription factor family in plants: a genome-wide study of protein structure and functional diversity.</title>
        <authorList>
            <person name="Heim M.A."/>
            <person name="Jakoby M."/>
            <person name="Werber M."/>
            <person name="Martin C."/>
            <person name="Weisshaar B."/>
            <person name="Bailey P.C."/>
        </authorList>
    </citation>
    <scope>NUCLEOTIDE SEQUENCE [MRNA]</scope>
    <scope>TISSUE SPECIFICITY</scope>
    <scope>GENE FAMILY</scope>
    <scope>NOMENCLATURE</scope>
    <source>
        <strain>cv. Columbia</strain>
        <tissue>Flower</tissue>
    </source>
</reference>
<reference key="2">
    <citation type="journal article" date="2000" name="DNA Res.">
        <title>Structural analysis of Arabidopsis thaliana chromosome 5. X. Sequence features of the regions of 3,076,755 bp covered by sixty P1 and TAC clones.</title>
        <authorList>
            <person name="Sato S."/>
            <person name="Nakamura Y."/>
            <person name="Kaneko T."/>
            <person name="Katoh T."/>
            <person name="Asamizu E."/>
            <person name="Kotani H."/>
            <person name="Tabata S."/>
        </authorList>
    </citation>
    <scope>NUCLEOTIDE SEQUENCE [LARGE SCALE GENOMIC DNA]</scope>
    <source>
        <strain>cv. Columbia</strain>
    </source>
</reference>
<reference key="3">
    <citation type="journal article" date="2017" name="Plant J.">
        <title>Araport11: a complete reannotation of the Arabidopsis thaliana reference genome.</title>
        <authorList>
            <person name="Cheng C.Y."/>
            <person name="Krishnakumar V."/>
            <person name="Chan A.P."/>
            <person name="Thibaud-Nissen F."/>
            <person name="Schobel S."/>
            <person name="Town C.D."/>
        </authorList>
    </citation>
    <scope>GENOME REANNOTATION</scope>
    <source>
        <strain>cv. Columbia</strain>
    </source>
</reference>
<reference key="4">
    <citation type="submission" date="2006-07" db="EMBL/GenBank/DDBJ databases">
        <title>Large-scale analysis of RIKEN Arabidopsis full-length (RAFL) cDNAs.</title>
        <authorList>
            <person name="Totoki Y."/>
            <person name="Seki M."/>
            <person name="Ishida J."/>
            <person name="Nakajima M."/>
            <person name="Enju A."/>
            <person name="Kamiya A."/>
            <person name="Narusaka M."/>
            <person name="Shin-i T."/>
            <person name="Nakagawa M."/>
            <person name="Sakamoto N."/>
            <person name="Oishi K."/>
            <person name="Kohara Y."/>
            <person name="Kobayashi M."/>
            <person name="Toyoda A."/>
            <person name="Sakaki Y."/>
            <person name="Sakurai T."/>
            <person name="Iida K."/>
            <person name="Akiyama K."/>
            <person name="Satou M."/>
            <person name="Toyoda T."/>
            <person name="Konagaya A."/>
            <person name="Carninci P."/>
            <person name="Kawai J."/>
            <person name="Hayashizaki Y."/>
            <person name="Shinozaki K."/>
        </authorList>
    </citation>
    <scope>NUCLEOTIDE SEQUENCE [LARGE SCALE MRNA]</scope>
    <source>
        <strain>cv. Columbia</strain>
    </source>
</reference>
<reference key="5">
    <citation type="journal article" date="2003" name="Plant Cell">
        <title>The Arabidopsis basic/helix-loop-helix transcription factor family.</title>
        <authorList>
            <person name="Toledo-Ortiz G."/>
            <person name="Huq E."/>
            <person name="Quail P.H."/>
        </authorList>
    </citation>
    <scope>GENE FAMILY</scope>
</reference>
<reference key="6">
    <citation type="journal article" date="2003" name="Plant Cell">
        <title>Update on the basic helix-loop-helix transcription factor gene family in Arabidopsis thaliana.</title>
        <authorList>
            <person name="Bailey P.C."/>
            <person name="Martin C."/>
            <person name="Toledo-Ortiz G."/>
            <person name="Quail P.H."/>
            <person name="Huq E."/>
            <person name="Heim M.A."/>
            <person name="Jakoby M."/>
            <person name="Werber M."/>
            <person name="Weisshaar B."/>
        </authorList>
    </citation>
    <scope>GENE FAMILY</scope>
    <scope>NOMENCLATURE</scope>
</reference>
<reference key="7">
    <citation type="journal article" date="2007" name="Development">
        <title>The HECATE genes regulate female reproductive tract development in Arabidopsis thaliana.</title>
        <authorList>
            <person name="Gremski K."/>
            <person name="Ditta G."/>
            <person name="Yanofsky M.F."/>
        </authorList>
    </citation>
    <scope>FUNCTION</scope>
    <scope>DISRUPTION PHENOTYPE</scope>
    <scope>INTERACTION WITH SPT</scope>
    <scope>INDUCTION BY ARF3/ETT</scope>
    <scope>DEVELOPMENTAL STAGE</scope>
    <scope>TISSUE SPECIFICITY</scope>
</reference>
<reference key="8">
    <citation type="journal article" date="2016" name="Plant J.">
        <title>Altered expression of the bZIP transcription factor DRINK ME affects growth and reproductive development in Arabidopsis thaliana.</title>
        <authorList>
            <person name="Lozano-Sotomayor P."/>
            <person name="Chavez Montes R.A."/>
            <person name="Silvestre-Vano M."/>
            <person name="Herrera-Ubaldo H."/>
            <person name="Greco R."/>
            <person name="Pablo-Villa J."/>
            <person name="Galliani B.M."/>
            <person name="Diaz-Ramirez D."/>
            <person name="Weemen M."/>
            <person name="Boutilier K."/>
            <person name="Pereira A."/>
            <person name="Colombo L."/>
            <person name="Madueno F."/>
            <person name="Marsch-Martinez N."/>
            <person name="de Folter S."/>
        </authorList>
    </citation>
    <scope>INTERACTION WITH BZIP30</scope>
</reference>
<gene>
    <name type="primary">HEC1</name>
    <name type="synonym">BHLH88</name>
    <name type="synonym">EN118</name>
    <name type="ordered locus">At5g67060</name>
    <name type="ORF">K21H1.2</name>
</gene>
<feature type="chain" id="PRO_0000358845" description="Transcription factor HEC1">
    <location>
        <begin position="1"/>
        <end position="241"/>
    </location>
</feature>
<feature type="domain" description="bHLH" evidence="1">
    <location>
        <begin position="128"/>
        <end position="177"/>
    </location>
</feature>